<organism>
    <name type="scientific">Cupriavidus metallidurans (strain ATCC 43123 / DSM 2839 / NBRC 102507 / CH34)</name>
    <name type="common">Ralstonia metallidurans</name>
    <dbReference type="NCBI Taxonomy" id="266264"/>
    <lineage>
        <taxon>Bacteria</taxon>
        <taxon>Pseudomonadati</taxon>
        <taxon>Pseudomonadota</taxon>
        <taxon>Betaproteobacteria</taxon>
        <taxon>Burkholderiales</taxon>
        <taxon>Burkholderiaceae</taxon>
        <taxon>Cupriavidus</taxon>
    </lineage>
</organism>
<evidence type="ECO:0000250" key="1"/>
<evidence type="ECO:0000255" key="2">
    <source>
        <dbReference type="HAMAP-Rule" id="MF_01057"/>
    </source>
</evidence>
<evidence type="ECO:0000256" key="3">
    <source>
        <dbReference type="SAM" id="MobiDB-lite"/>
    </source>
</evidence>
<reference key="1">
    <citation type="journal article" date="2010" name="PLoS ONE">
        <title>The complete genome sequence of Cupriavidus metallidurans strain CH34, a master survivalist in harsh and anthropogenic environments.</title>
        <authorList>
            <person name="Janssen P.J."/>
            <person name="Van Houdt R."/>
            <person name="Moors H."/>
            <person name="Monsieurs P."/>
            <person name="Morin N."/>
            <person name="Michaux A."/>
            <person name="Benotmane M.A."/>
            <person name="Leys N."/>
            <person name="Vallaeys T."/>
            <person name="Lapidus A."/>
            <person name="Monchy S."/>
            <person name="Medigue C."/>
            <person name="Taghavi S."/>
            <person name="McCorkle S."/>
            <person name="Dunn J."/>
            <person name="van der Lelie D."/>
            <person name="Mergeay M."/>
        </authorList>
    </citation>
    <scope>NUCLEOTIDE SEQUENCE [LARGE SCALE GENOMIC DNA]</scope>
    <source>
        <strain>ATCC 43123 / DSM 2839 / NBRC 102507 / CH34</strain>
    </source>
</reference>
<dbReference type="EC" id="2.1.1.33" evidence="2"/>
<dbReference type="EMBL" id="CP000352">
    <property type="protein sequence ID" value="ABF09577.1"/>
    <property type="molecule type" value="Genomic_DNA"/>
</dbReference>
<dbReference type="RefSeq" id="WP_011517275.1">
    <property type="nucleotide sequence ID" value="NC_007973.1"/>
</dbReference>
<dbReference type="SMR" id="Q1LJU9"/>
<dbReference type="STRING" id="266264.Rmet_2704"/>
<dbReference type="KEGG" id="rme:Rmet_2704"/>
<dbReference type="eggNOG" id="COG0220">
    <property type="taxonomic scope" value="Bacteria"/>
</dbReference>
<dbReference type="HOGENOM" id="CLU_050910_0_1_4"/>
<dbReference type="UniPathway" id="UPA00989"/>
<dbReference type="Proteomes" id="UP000002429">
    <property type="component" value="Chromosome"/>
</dbReference>
<dbReference type="GO" id="GO:0043527">
    <property type="term" value="C:tRNA methyltransferase complex"/>
    <property type="evidence" value="ECO:0007669"/>
    <property type="project" value="TreeGrafter"/>
</dbReference>
<dbReference type="GO" id="GO:0008176">
    <property type="term" value="F:tRNA (guanine(46)-N7)-methyltransferase activity"/>
    <property type="evidence" value="ECO:0007669"/>
    <property type="project" value="UniProtKB-UniRule"/>
</dbReference>
<dbReference type="CDD" id="cd02440">
    <property type="entry name" value="AdoMet_MTases"/>
    <property type="match status" value="1"/>
</dbReference>
<dbReference type="FunFam" id="3.40.50.150:FF:000035">
    <property type="entry name" value="tRNA (guanine-N(7)-)-methyltransferase"/>
    <property type="match status" value="1"/>
</dbReference>
<dbReference type="Gene3D" id="3.40.50.150">
    <property type="entry name" value="Vaccinia Virus protein VP39"/>
    <property type="match status" value="1"/>
</dbReference>
<dbReference type="HAMAP" id="MF_01057">
    <property type="entry name" value="tRNA_methyltr_TrmB"/>
    <property type="match status" value="1"/>
</dbReference>
<dbReference type="InterPro" id="IPR029063">
    <property type="entry name" value="SAM-dependent_MTases_sf"/>
</dbReference>
<dbReference type="InterPro" id="IPR003358">
    <property type="entry name" value="tRNA_(Gua-N-7)_MeTrfase_Trmb"/>
</dbReference>
<dbReference type="InterPro" id="IPR055361">
    <property type="entry name" value="tRNA_methyltr_TrmB_bact"/>
</dbReference>
<dbReference type="NCBIfam" id="TIGR00091">
    <property type="entry name" value="tRNA (guanosine(46)-N7)-methyltransferase TrmB"/>
    <property type="match status" value="1"/>
</dbReference>
<dbReference type="PANTHER" id="PTHR23417">
    <property type="entry name" value="3-DEOXY-D-MANNO-OCTULOSONIC-ACID TRANSFERASE/TRNA GUANINE-N 7 - -METHYLTRANSFERASE"/>
    <property type="match status" value="1"/>
</dbReference>
<dbReference type="PANTHER" id="PTHR23417:SF14">
    <property type="entry name" value="PENTACOTRIPEPTIDE-REPEAT REGION OF PRORP DOMAIN-CONTAINING PROTEIN"/>
    <property type="match status" value="1"/>
</dbReference>
<dbReference type="Pfam" id="PF02390">
    <property type="entry name" value="Methyltransf_4"/>
    <property type="match status" value="1"/>
</dbReference>
<dbReference type="SUPFAM" id="SSF53335">
    <property type="entry name" value="S-adenosyl-L-methionine-dependent methyltransferases"/>
    <property type="match status" value="1"/>
</dbReference>
<dbReference type="PROSITE" id="PS51625">
    <property type="entry name" value="SAM_MT_TRMB"/>
    <property type="match status" value="1"/>
</dbReference>
<comment type="function">
    <text evidence="2">Catalyzes the formation of N(7)-methylguanine at position 46 (m7G46) in tRNA.</text>
</comment>
<comment type="catalytic activity">
    <reaction evidence="2">
        <text>guanosine(46) in tRNA + S-adenosyl-L-methionine = N(7)-methylguanosine(46) in tRNA + S-adenosyl-L-homocysteine</text>
        <dbReference type="Rhea" id="RHEA:42708"/>
        <dbReference type="Rhea" id="RHEA-COMP:10188"/>
        <dbReference type="Rhea" id="RHEA-COMP:10189"/>
        <dbReference type="ChEBI" id="CHEBI:57856"/>
        <dbReference type="ChEBI" id="CHEBI:59789"/>
        <dbReference type="ChEBI" id="CHEBI:74269"/>
        <dbReference type="ChEBI" id="CHEBI:74480"/>
        <dbReference type="EC" id="2.1.1.33"/>
    </reaction>
</comment>
<comment type="pathway">
    <text evidence="2">tRNA modification; N(7)-methylguanine-tRNA biosynthesis.</text>
</comment>
<comment type="similarity">
    <text evidence="2">Belongs to the class I-like SAM-binding methyltransferase superfamily. TrmB family.</text>
</comment>
<proteinExistence type="inferred from homology"/>
<keyword id="KW-0489">Methyltransferase</keyword>
<keyword id="KW-1185">Reference proteome</keyword>
<keyword id="KW-0949">S-adenosyl-L-methionine</keyword>
<keyword id="KW-0808">Transferase</keyword>
<keyword id="KW-0819">tRNA processing</keyword>
<protein>
    <recommendedName>
        <fullName evidence="2">tRNA (guanine-N(7)-)-methyltransferase</fullName>
        <ecNumber evidence="2">2.1.1.33</ecNumber>
    </recommendedName>
    <alternativeName>
        <fullName evidence="2">tRNA (guanine(46)-N(7))-methyltransferase</fullName>
    </alternativeName>
    <alternativeName>
        <fullName evidence="2">tRNA(m7G46)-methyltransferase</fullName>
    </alternativeName>
</protein>
<sequence>MLPQDTNTDPLPGDDAESASGKSADASQGTPNPGDEVAHPRRIRSFVRRAGRTSTGQQRAMDELGPTYIVPYQPEPLDWTATFGREAPSILEIGFGMGETTAHIAGLRSQDNFLGCEVHEPGVGALLKLIGERGLQNVRIMQHDAVEVAAHMLTENSLDGVHIYFPDPWHKKRHNKRRLVQPPLVKLLASRLKPGGYIHCATDWEEYAHQMVEVLSGEPALENTSKADGGFAERPDYRPVTKFEKRGLRLGHGVWDVVFRKK</sequence>
<feature type="chain" id="PRO_0000288208" description="tRNA (guanine-N(7)-)-methyltransferase">
    <location>
        <begin position="1"/>
        <end position="262"/>
    </location>
</feature>
<feature type="region of interest" description="Disordered" evidence="3">
    <location>
        <begin position="1"/>
        <end position="58"/>
    </location>
</feature>
<feature type="region of interest" description="Interaction with RNA" evidence="2">
    <location>
        <begin position="173"/>
        <end position="178"/>
    </location>
</feature>
<feature type="compositionally biased region" description="Basic residues" evidence="3">
    <location>
        <begin position="40"/>
        <end position="51"/>
    </location>
</feature>
<feature type="active site" evidence="1">
    <location>
        <position position="167"/>
    </location>
</feature>
<feature type="binding site" evidence="2">
    <location>
        <position position="92"/>
    </location>
    <ligand>
        <name>S-adenosyl-L-methionine</name>
        <dbReference type="ChEBI" id="CHEBI:59789"/>
    </ligand>
</feature>
<feature type="binding site" evidence="2">
    <location>
        <position position="117"/>
    </location>
    <ligand>
        <name>S-adenosyl-L-methionine</name>
        <dbReference type="ChEBI" id="CHEBI:59789"/>
    </ligand>
</feature>
<feature type="binding site" evidence="2">
    <location>
        <position position="144"/>
    </location>
    <ligand>
        <name>S-adenosyl-L-methionine</name>
        <dbReference type="ChEBI" id="CHEBI:59789"/>
    </ligand>
</feature>
<feature type="binding site" evidence="2">
    <location>
        <position position="167"/>
    </location>
    <ligand>
        <name>S-adenosyl-L-methionine</name>
        <dbReference type="ChEBI" id="CHEBI:59789"/>
    </ligand>
</feature>
<feature type="binding site" evidence="2">
    <location>
        <position position="171"/>
    </location>
    <ligand>
        <name>substrate</name>
    </ligand>
</feature>
<feature type="binding site" evidence="2">
    <location>
        <position position="203"/>
    </location>
    <ligand>
        <name>substrate</name>
    </ligand>
</feature>
<feature type="binding site" evidence="2">
    <location>
        <begin position="241"/>
        <end position="244"/>
    </location>
    <ligand>
        <name>substrate</name>
    </ligand>
</feature>
<gene>
    <name evidence="2" type="primary">trmB</name>
    <name type="ordered locus">Rmet_2704</name>
</gene>
<accession>Q1LJU9</accession>
<name>TRMB_CUPMC</name>